<sequence>MSPSPEQVMQFLYALRSRGVRDRAVLTAMEKIDRGLFVEGVFSGRAYEDVPLPIACGQTISQPSIVGLMTQAAEIGPRHHVLEVGTGAGYQAAILSQLARRVWTVDRHRRLTRAAEARFKALDLTNVTVLTGDGSFGLPDQAPFDRILVTAAAEDPPGPLLAQLREGGIMVVPVGQSDAVQSLIKVTRTESGFDYEEMRSVRFVPLVEGIAPENSA</sequence>
<gene>
    <name evidence="1" type="primary">pcm</name>
    <name type="ordered locus">Dshi_2137</name>
</gene>
<reference key="1">
    <citation type="journal article" date="2010" name="ISME J.">
        <title>The complete genome sequence of the algal symbiont Dinoroseobacter shibae: a hitchhiker's guide to life in the sea.</title>
        <authorList>
            <person name="Wagner-Dobler I."/>
            <person name="Ballhausen B."/>
            <person name="Berger M."/>
            <person name="Brinkhoff T."/>
            <person name="Buchholz I."/>
            <person name="Bunk B."/>
            <person name="Cypionka H."/>
            <person name="Daniel R."/>
            <person name="Drepper T."/>
            <person name="Gerdts G."/>
            <person name="Hahnke S."/>
            <person name="Han C."/>
            <person name="Jahn D."/>
            <person name="Kalhoefer D."/>
            <person name="Kiss H."/>
            <person name="Klenk H.P."/>
            <person name="Kyrpides N."/>
            <person name="Liebl W."/>
            <person name="Liesegang H."/>
            <person name="Meincke L."/>
            <person name="Pati A."/>
            <person name="Petersen J."/>
            <person name="Piekarski T."/>
            <person name="Pommerenke C."/>
            <person name="Pradella S."/>
            <person name="Pukall R."/>
            <person name="Rabus R."/>
            <person name="Stackebrandt E."/>
            <person name="Thole S."/>
            <person name="Thompson L."/>
            <person name="Tielen P."/>
            <person name="Tomasch J."/>
            <person name="von Jan M."/>
            <person name="Wanphrut N."/>
            <person name="Wichels A."/>
            <person name="Zech H."/>
            <person name="Simon M."/>
        </authorList>
    </citation>
    <scope>NUCLEOTIDE SEQUENCE [LARGE SCALE GENOMIC DNA]</scope>
    <source>
        <strain>DSM 16493 / NCIMB 14021 / DFL 12</strain>
    </source>
</reference>
<organism>
    <name type="scientific">Dinoroseobacter shibae (strain DSM 16493 / NCIMB 14021 / DFL 12)</name>
    <dbReference type="NCBI Taxonomy" id="398580"/>
    <lineage>
        <taxon>Bacteria</taxon>
        <taxon>Pseudomonadati</taxon>
        <taxon>Pseudomonadota</taxon>
        <taxon>Alphaproteobacteria</taxon>
        <taxon>Rhodobacterales</taxon>
        <taxon>Roseobacteraceae</taxon>
        <taxon>Dinoroseobacter</taxon>
    </lineage>
</organism>
<protein>
    <recommendedName>
        <fullName evidence="1">Protein-L-isoaspartate O-methyltransferase</fullName>
        <ecNumber evidence="1">2.1.1.77</ecNumber>
    </recommendedName>
    <alternativeName>
        <fullName evidence="1">L-isoaspartyl protein carboxyl methyltransferase</fullName>
    </alternativeName>
    <alternativeName>
        <fullName evidence="1">Protein L-isoaspartyl methyltransferase</fullName>
    </alternativeName>
    <alternativeName>
        <fullName evidence="1">Protein-beta-aspartate methyltransferase</fullName>
        <shortName evidence="1">PIMT</shortName>
    </alternativeName>
</protein>
<dbReference type="EC" id="2.1.1.77" evidence="1"/>
<dbReference type="EMBL" id="CP000830">
    <property type="protein sequence ID" value="ABV93873.1"/>
    <property type="molecule type" value="Genomic_DNA"/>
</dbReference>
<dbReference type="RefSeq" id="WP_012178805.1">
    <property type="nucleotide sequence ID" value="NC_009952.1"/>
</dbReference>
<dbReference type="SMR" id="A8LQK6"/>
<dbReference type="STRING" id="398580.Dshi_2137"/>
<dbReference type="KEGG" id="dsh:Dshi_2137"/>
<dbReference type="eggNOG" id="COG2518">
    <property type="taxonomic scope" value="Bacteria"/>
</dbReference>
<dbReference type="HOGENOM" id="CLU_055432_2_0_5"/>
<dbReference type="OrthoDB" id="9810066at2"/>
<dbReference type="Proteomes" id="UP000006833">
    <property type="component" value="Chromosome"/>
</dbReference>
<dbReference type="GO" id="GO:0005737">
    <property type="term" value="C:cytoplasm"/>
    <property type="evidence" value="ECO:0007669"/>
    <property type="project" value="UniProtKB-SubCell"/>
</dbReference>
<dbReference type="GO" id="GO:0004719">
    <property type="term" value="F:protein-L-isoaspartate (D-aspartate) O-methyltransferase activity"/>
    <property type="evidence" value="ECO:0007669"/>
    <property type="project" value="UniProtKB-UniRule"/>
</dbReference>
<dbReference type="GO" id="GO:0032259">
    <property type="term" value="P:methylation"/>
    <property type="evidence" value="ECO:0007669"/>
    <property type="project" value="UniProtKB-KW"/>
</dbReference>
<dbReference type="GO" id="GO:0036211">
    <property type="term" value="P:protein modification process"/>
    <property type="evidence" value="ECO:0007669"/>
    <property type="project" value="UniProtKB-UniRule"/>
</dbReference>
<dbReference type="GO" id="GO:0030091">
    <property type="term" value="P:protein repair"/>
    <property type="evidence" value="ECO:0007669"/>
    <property type="project" value="UniProtKB-UniRule"/>
</dbReference>
<dbReference type="CDD" id="cd02440">
    <property type="entry name" value="AdoMet_MTases"/>
    <property type="match status" value="1"/>
</dbReference>
<dbReference type="FunFam" id="3.40.50.150:FF:000010">
    <property type="entry name" value="Protein-L-isoaspartate O-methyltransferase"/>
    <property type="match status" value="1"/>
</dbReference>
<dbReference type="Gene3D" id="3.40.50.150">
    <property type="entry name" value="Vaccinia Virus protein VP39"/>
    <property type="match status" value="1"/>
</dbReference>
<dbReference type="HAMAP" id="MF_00090">
    <property type="entry name" value="PIMT"/>
    <property type="match status" value="1"/>
</dbReference>
<dbReference type="InterPro" id="IPR000682">
    <property type="entry name" value="PCMT"/>
</dbReference>
<dbReference type="InterPro" id="IPR029063">
    <property type="entry name" value="SAM-dependent_MTases_sf"/>
</dbReference>
<dbReference type="NCBIfam" id="TIGR00080">
    <property type="entry name" value="pimt"/>
    <property type="match status" value="1"/>
</dbReference>
<dbReference type="NCBIfam" id="NF001453">
    <property type="entry name" value="PRK00312.1"/>
    <property type="match status" value="1"/>
</dbReference>
<dbReference type="PANTHER" id="PTHR11579">
    <property type="entry name" value="PROTEIN-L-ISOASPARTATE O-METHYLTRANSFERASE"/>
    <property type="match status" value="1"/>
</dbReference>
<dbReference type="PANTHER" id="PTHR11579:SF0">
    <property type="entry name" value="PROTEIN-L-ISOASPARTATE(D-ASPARTATE) O-METHYLTRANSFERASE"/>
    <property type="match status" value="1"/>
</dbReference>
<dbReference type="Pfam" id="PF01135">
    <property type="entry name" value="PCMT"/>
    <property type="match status" value="1"/>
</dbReference>
<dbReference type="SUPFAM" id="SSF53335">
    <property type="entry name" value="S-adenosyl-L-methionine-dependent methyltransferases"/>
    <property type="match status" value="1"/>
</dbReference>
<dbReference type="PROSITE" id="PS01279">
    <property type="entry name" value="PCMT"/>
    <property type="match status" value="1"/>
</dbReference>
<proteinExistence type="inferred from homology"/>
<accession>A8LQK6</accession>
<keyword id="KW-0963">Cytoplasm</keyword>
<keyword id="KW-0489">Methyltransferase</keyword>
<keyword id="KW-1185">Reference proteome</keyword>
<keyword id="KW-0949">S-adenosyl-L-methionine</keyword>
<keyword id="KW-0808">Transferase</keyword>
<evidence type="ECO:0000255" key="1">
    <source>
        <dbReference type="HAMAP-Rule" id="MF_00090"/>
    </source>
</evidence>
<name>PIMT_DINSH</name>
<comment type="function">
    <text evidence="1">Catalyzes the methyl esterification of L-isoaspartyl residues in peptides and proteins that result from spontaneous decomposition of normal L-aspartyl and L-asparaginyl residues. It plays a role in the repair and/or degradation of damaged proteins.</text>
</comment>
<comment type="catalytic activity">
    <reaction evidence="1">
        <text>[protein]-L-isoaspartate + S-adenosyl-L-methionine = [protein]-L-isoaspartate alpha-methyl ester + S-adenosyl-L-homocysteine</text>
        <dbReference type="Rhea" id="RHEA:12705"/>
        <dbReference type="Rhea" id="RHEA-COMP:12143"/>
        <dbReference type="Rhea" id="RHEA-COMP:12144"/>
        <dbReference type="ChEBI" id="CHEBI:57856"/>
        <dbReference type="ChEBI" id="CHEBI:59789"/>
        <dbReference type="ChEBI" id="CHEBI:90596"/>
        <dbReference type="ChEBI" id="CHEBI:90598"/>
        <dbReference type="EC" id="2.1.1.77"/>
    </reaction>
</comment>
<comment type="subcellular location">
    <subcellularLocation>
        <location evidence="1">Cytoplasm</location>
    </subcellularLocation>
</comment>
<comment type="similarity">
    <text evidence="1">Belongs to the methyltransferase superfamily. L-isoaspartyl/D-aspartyl protein methyltransferase family.</text>
</comment>
<feature type="chain" id="PRO_0000351855" description="Protein-L-isoaspartate O-methyltransferase">
    <location>
        <begin position="1"/>
        <end position="216"/>
    </location>
</feature>
<feature type="active site" evidence="1">
    <location>
        <position position="61"/>
    </location>
</feature>